<gene>
    <name evidence="1" type="primary">prfB</name>
    <name type="ordered locus">Sbal223_3420</name>
</gene>
<organism>
    <name type="scientific">Shewanella baltica (strain OS223)</name>
    <dbReference type="NCBI Taxonomy" id="407976"/>
    <lineage>
        <taxon>Bacteria</taxon>
        <taxon>Pseudomonadati</taxon>
        <taxon>Pseudomonadota</taxon>
        <taxon>Gammaproteobacteria</taxon>
        <taxon>Alteromonadales</taxon>
        <taxon>Shewanellaceae</taxon>
        <taxon>Shewanella</taxon>
    </lineage>
</organism>
<name>RF2_SHEB2</name>
<proteinExistence type="inferred from homology"/>
<feature type="chain" id="PRO_1000193558" description="Peptide chain release factor 2">
    <location>
        <begin position="1"/>
        <end position="365"/>
    </location>
</feature>
<feature type="modified residue" description="N5-methylglutamine" evidence="1">
    <location>
        <position position="252"/>
    </location>
</feature>
<protein>
    <recommendedName>
        <fullName evidence="1">Peptide chain release factor 2</fullName>
        <shortName evidence="1">RF-2</shortName>
    </recommendedName>
</protein>
<dbReference type="EMBL" id="CP001252">
    <property type="protein sequence ID" value="ACK47904.1"/>
    <property type="molecule type" value="Genomic_DNA"/>
</dbReference>
<dbReference type="SMR" id="B8E5Q1"/>
<dbReference type="KEGG" id="sbp:Sbal223_3420"/>
<dbReference type="HOGENOM" id="CLU_220733_1_1_6"/>
<dbReference type="Proteomes" id="UP000002507">
    <property type="component" value="Chromosome"/>
</dbReference>
<dbReference type="GO" id="GO:0005737">
    <property type="term" value="C:cytoplasm"/>
    <property type="evidence" value="ECO:0007669"/>
    <property type="project" value="UniProtKB-SubCell"/>
</dbReference>
<dbReference type="GO" id="GO:0016149">
    <property type="term" value="F:translation release factor activity, codon specific"/>
    <property type="evidence" value="ECO:0007669"/>
    <property type="project" value="UniProtKB-UniRule"/>
</dbReference>
<dbReference type="FunFam" id="3.30.160.20:FF:000010">
    <property type="entry name" value="Peptide chain release factor 2"/>
    <property type="match status" value="1"/>
</dbReference>
<dbReference type="Gene3D" id="3.30.160.20">
    <property type="match status" value="1"/>
</dbReference>
<dbReference type="Gene3D" id="3.30.70.1660">
    <property type="match status" value="1"/>
</dbReference>
<dbReference type="Gene3D" id="1.20.58.410">
    <property type="entry name" value="Release factor"/>
    <property type="match status" value="1"/>
</dbReference>
<dbReference type="HAMAP" id="MF_00094">
    <property type="entry name" value="Rel_fac_2"/>
    <property type="match status" value="1"/>
</dbReference>
<dbReference type="InterPro" id="IPR005139">
    <property type="entry name" value="PCRF"/>
</dbReference>
<dbReference type="InterPro" id="IPR000352">
    <property type="entry name" value="Pep_chain_release_fac_I"/>
</dbReference>
<dbReference type="InterPro" id="IPR045853">
    <property type="entry name" value="Pep_chain_release_fac_I_sf"/>
</dbReference>
<dbReference type="InterPro" id="IPR004374">
    <property type="entry name" value="PrfB"/>
</dbReference>
<dbReference type="NCBIfam" id="TIGR00020">
    <property type="entry name" value="prfB"/>
    <property type="match status" value="1"/>
</dbReference>
<dbReference type="PANTHER" id="PTHR43116:SF3">
    <property type="entry name" value="CLASS I PEPTIDE CHAIN RELEASE FACTOR"/>
    <property type="match status" value="1"/>
</dbReference>
<dbReference type="PANTHER" id="PTHR43116">
    <property type="entry name" value="PEPTIDE CHAIN RELEASE FACTOR 2"/>
    <property type="match status" value="1"/>
</dbReference>
<dbReference type="Pfam" id="PF03462">
    <property type="entry name" value="PCRF"/>
    <property type="match status" value="1"/>
</dbReference>
<dbReference type="Pfam" id="PF00472">
    <property type="entry name" value="RF-1"/>
    <property type="match status" value="1"/>
</dbReference>
<dbReference type="SMART" id="SM00937">
    <property type="entry name" value="PCRF"/>
    <property type="match status" value="1"/>
</dbReference>
<dbReference type="SUPFAM" id="SSF75620">
    <property type="entry name" value="Release factor"/>
    <property type="match status" value="1"/>
</dbReference>
<dbReference type="PROSITE" id="PS00745">
    <property type="entry name" value="RF_PROK_I"/>
    <property type="match status" value="1"/>
</dbReference>
<reference key="1">
    <citation type="submission" date="2008-12" db="EMBL/GenBank/DDBJ databases">
        <title>Complete sequence of chromosome of Shewanella baltica OS223.</title>
        <authorList>
            <consortium name="US DOE Joint Genome Institute"/>
            <person name="Lucas S."/>
            <person name="Copeland A."/>
            <person name="Lapidus A."/>
            <person name="Glavina del Rio T."/>
            <person name="Dalin E."/>
            <person name="Tice H."/>
            <person name="Bruce D."/>
            <person name="Goodwin L."/>
            <person name="Pitluck S."/>
            <person name="Chertkov O."/>
            <person name="Meincke L."/>
            <person name="Brettin T."/>
            <person name="Detter J.C."/>
            <person name="Han C."/>
            <person name="Kuske C.R."/>
            <person name="Larimer F."/>
            <person name="Land M."/>
            <person name="Hauser L."/>
            <person name="Kyrpides N."/>
            <person name="Ovchinnikova G."/>
            <person name="Brettar I."/>
            <person name="Rodrigues J."/>
            <person name="Konstantinidis K."/>
            <person name="Tiedje J."/>
        </authorList>
    </citation>
    <scope>NUCLEOTIDE SEQUENCE [LARGE SCALE GENOMIC DNA]</scope>
    <source>
        <strain>OS223</strain>
    </source>
</reference>
<sequence>MFEVNPVKFKIKELAERTQLLRGIFDYDAKNERLEEVTRELESSEVWNDPERAQALGKERASLEAVVKTIDDMDSGLEDVEGLLELAIEEEDEDTFNETSKELDYLESRLADLEFRRMFSGPQDASNCYLDIQSGSGGTEAQDWANMVLRMYLRWGEAHGFSPELMEVTDGDVAGIKGATIKFTGEYAFGWLRTETGVHRLVRKSPFDSSGRRHTSFCSVFVYPEIDDDITIDINPSDLRIDTYRASGAGGQHVNKTESAIRITHLPTNTVVQCQNDRSQHKNKDAAMKQLKAKLFELEMLKQNADKQAAEDAKSDIGWGSQIRSYVLDDARIKDLRTGVETRNTQAVLDGDLDKFIEASLKSGL</sequence>
<evidence type="ECO:0000255" key="1">
    <source>
        <dbReference type="HAMAP-Rule" id="MF_00094"/>
    </source>
</evidence>
<comment type="function">
    <text evidence="1">Peptide chain release factor 2 directs the termination of translation in response to the peptide chain termination codons UGA and UAA.</text>
</comment>
<comment type="subcellular location">
    <subcellularLocation>
        <location evidence="1">Cytoplasm</location>
    </subcellularLocation>
</comment>
<comment type="PTM">
    <text evidence="1">Methylated by PrmC. Methylation increases the termination efficiency of RF2.</text>
</comment>
<comment type="similarity">
    <text evidence="1">Belongs to the prokaryotic/mitochondrial release factor family.</text>
</comment>
<keyword id="KW-0963">Cytoplasm</keyword>
<keyword id="KW-0488">Methylation</keyword>
<keyword id="KW-0648">Protein biosynthesis</keyword>
<accession>B8E5Q1</accession>